<comment type="function">
    <text evidence="1 2 3">Plays an essential role in virion nuclear egress, the first step of virion release from infected cell. Within the host nucleus, NEC1 interacts with the newly formed capsid through the vertexes and directs it to the inner nuclear membrane by associating with NEC2. Induces the budding of the capsid at the inner nuclear membrane as well as its envelopment into the perinuclear space. There, the NEC1/NEC2 complex promotes the fusion of the enveloped capsid with the outer nuclear membrane and the subsequent release of the viral capsid into the cytoplasm where it will reach the secondary budding sites in the host Golgi or trans-Golgi network.</text>
</comment>
<comment type="subunit">
    <text evidence="1">Forms a heterohexameric complex with NEC1.</text>
</comment>
<comment type="subcellular location">
    <subcellularLocation>
        <location evidence="1 2 3">Host nucleus inner membrane</location>
        <topology evidence="1 2 3">Single-pass membrane protein</topology>
    </subcellularLocation>
    <text evidence="1">Also localizes at the transient membrane of perinuclear virions.</text>
</comment>
<comment type="PTM">
    <text evidence="1">Phosphorylated.</text>
</comment>
<comment type="similarity">
    <text evidence="1">Belongs to the herpesviridae NEC2 protein family.</text>
</comment>
<sequence>MSVVGKRVVDELCRVVSSYLGQSGQSLDLERCIDGAPVYAKGGATAICTVRMQHGCVYHLEFVYKFWAHLLEEMHYPFSPCFVISNNGLSTTLKCFLCRPSDAVSQFGHVLPVESDVYLAKNTSVVLGQDDFTKFKASLVFSKNLGVYNSMVICRTYFTDYRQVLQFLVVTPKSHKRLKSLLETVYCLAAPVADSAAQGGAGFPTNGRDARACTSDVTAVYWAGQGGRTVRILGAFQWSLGRAVALVRRSWPWISAGIAFLCLGLVWMRPS</sequence>
<reference key="1">
    <citation type="journal article" date="1999" name="J. Virol.">
        <title>Identification of a spliced gene from Kaposi's sarcoma-associated herpesvirus encoding a protein with similarities to latent membrane proteins 1 and 2A of Epstein-Barr virus.</title>
        <authorList>
            <person name="Glenn M."/>
            <person name="Rainbow L."/>
            <person name="Aurade F."/>
            <person name="Davison A."/>
            <person name="Schulz T.F."/>
        </authorList>
    </citation>
    <scope>NUCLEOTIDE SEQUENCE [LARGE SCALE GENOMIC DNA]</scope>
</reference>
<reference key="2">
    <citation type="journal article" date="2006" name="J. Gen. Virol.">
        <title>Kaposi's sarcoma-associated herpesvirus immune modulation: an overview.</title>
        <authorList>
            <person name="Rezaee S.A.R."/>
            <person name="Cunningham C."/>
            <person name="Davison A.J."/>
            <person name="Blackbourn D.J."/>
        </authorList>
    </citation>
    <scope>NUCLEOTIDE SEQUENCE [LARGE SCALE GENOMIC DNA]</scope>
</reference>
<reference key="3">
    <citation type="journal article" date="2013" name="J. Virol.">
        <title>Interactions of the Kaposi's Sarcoma-associated herpesvirus nuclear egress complex: ORF69 is a potent factor for remodeling cellular membranes.</title>
        <authorList>
            <person name="Luitweiler E.M."/>
            <person name="Henson B.W."/>
            <person name="Pryce E.N."/>
            <person name="Patel V."/>
            <person name="Coombs G."/>
            <person name="McCaffery J.M."/>
            <person name="Desai P.J."/>
        </authorList>
    </citation>
    <scope>FUNCTION</scope>
    <scope>SUBCELLULAR LOCATION</scope>
    <scope>INTERACTION WITH PROTEIN ORF69</scope>
</reference>
<reference key="4">
    <citation type="journal article" date="2013" name="Virus Res.">
        <title>KSHV ORF67 encoded lytic protein localizes on the nuclear membrane and alters emerin distribution.</title>
        <authorList>
            <person name="Farina A."/>
            <person name="Santarelli R."/>
            <person name="Bloise R."/>
            <person name="Gonnella R."/>
            <person name="Granato M."/>
            <person name="Bei R."/>
            <person name="Modesti A."/>
            <person name="Cirone M."/>
            <person name="Bengtsson L."/>
            <person name="Angeloni A."/>
            <person name="Faggioni A."/>
        </authorList>
    </citation>
    <scope>FUNCTION</scope>
    <scope>SUBCELLULAR LOCATION</scope>
</reference>
<keyword id="KW-1043">Host membrane</keyword>
<keyword id="KW-1048">Host nucleus</keyword>
<keyword id="KW-0426">Late protein</keyword>
<keyword id="KW-0472">Membrane</keyword>
<keyword id="KW-0597">Phosphoprotein</keyword>
<keyword id="KW-1185">Reference proteome</keyword>
<keyword id="KW-0812">Transmembrane</keyword>
<keyword id="KW-1133">Transmembrane helix</keyword>
<name>NEC2_HHV8P</name>
<organismHost>
    <name type="scientific">Homo sapiens</name>
    <name type="common">Human</name>
    <dbReference type="NCBI Taxonomy" id="9606"/>
</organismHost>
<evidence type="ECO:0000255" key="1">
    <source>
        <dbReference type="HAMAP-Rule" id="MF_04024"/>
    </source>
</evidence>
<evidence type="ECO:0000269" key="2">
    <source>
    </source>
</evidence>
<evidence type="ECO:0000269" key="3">
    <source>
    </source>
</evidence>
<accession>F5HA27</accession>
<proteinExistence type="evidence at protein level"/>
<protein>
    <recommendedName>
        <fullName evidence="1">Nuclear egress protein 2</fullName>
    </recommendedName>
</protein>
<gene>
    <name evidence="1" type="primary">NEC2</name>
    <name type="ordered locus">ORF67</name>
</gene>
<feature type="chain" id="PRO_0000423787" description="Nuclear egress protein 2">
    <location>
        <begin position="1"/>
        <end position="271"/>
    </location>
</feature>
<feature type="topological domain" description="Perinuclear space" evidence="1">
    <location>
        <begin position="1"/>
        <end position="249"/>
    </location>
</feature>
<feature type="transmembrane region" description="Helical" evidence="1">
    <location>
        <begin position="250"/>
        <end position="267"/>
    </location>
</feature>
<feature type="topological domain" description="Nuclear" evidence="1">
    <location>
        <begin position="268"/>
        <end position="271"/>
    </location>
</feature>
<organism>
    <name type="scientific">Human herpesvirus 8 type P (isolate GK18)</name>
    <name type="common">HHV-8</name>
    <name type="synonym">Kaposi's sarcoma-associated herpesvirus</name>
    <dbReference type="NCBI Taxonomy" id="868565"/>
    <lineage>
        <taxon>Viruses</taxon>
        <taxon>Duplodnaviria</taxon>
        <taxon>Heunggongvirae</taxon>
        <taxon>Peploviricota</taxon>
        <taxon>Herviviricetes</taxon>
        <taxon>Herpesvirales</taxon>
        <taxon>Orthoherpesviridae</taxon>
        <taxon>Gammaherpesvirinae</taxon>
        <taxon>Rhadinovirus</taxon>
        <taxon>Rhadinovirus humangamma8</taxon>
        <taxon>Human herpesvirus 8</taxon>
    </lineage>
</organism>
<dbReference type="EMBL" id="AF148805">
    <property type="protein sequence ID" value="ABD28920.1"/>
    <property type="molecule type" value="Genomic_DNA"/>
</dbReference>
<dbReference type="RefSeq" id="YP_001129424.1">
    <property type="nucleotide sequence ID" value="NC_009333.1"/>
</dbReference>
<dbReference type="SMR" id="F5HA27"/>
<dbReference type="BioGRID" id="1777027">
    <property type="interactions" value="2"/>
</dbReference>
<dbReference type="DNASU" id="4961524"/>
<dbReference type="GeneID" id="4961524"/>
<dbReference type="KEGG" id="vg:4961524"/>
<dbReference type="Proteomes" id="UP000000942">
    <property type="component" value="Segment"/>
</dbReference>
<dbReference type="GO" id="GO:0044201">
    <property type="term" value="C:host cell nuclear inner membrane"/>
    <property type="evidence" value="ECO:0007669"/>
    <property type="project" value="UniProtKB-SubCell"/>
</dbReference>
<dbReference type="GO" id="GO:0016020">
    <property type="term" value="C:membrane"/>
    <property type="evidence" value="ECO:0007669"/>
    <property type="project" value="UniProtKB-KW"/>
</dbReference>
<dbReference type="HAMAP" id="MF_04024">
    <property type="entry name" value="HSV_NEC2"/>
    <property type="match status" value="1"/>
</dbReference>
<dbReference type="InterPro" id="IPR007626">
    <property type="entry name" value="Herpesvirus_viron_egress-type"/>
</dbReference>
<dbReference type="Pfam" id="PF04541">
    <property type="entry name" value="Herpes_U34"/>
    <property type="match status" value="1"/>
</dbReference>